<feature type="chain" id="PRO_0000120238" description="U3 small nucleolar ribonucleoprotein protein IMP4">
    <location>
        <begin position="1"/>
        <end position="291"/>
    </location>
</feature>
<feature type="domain" description="Brix" evidence="2">
    <location>
        <begin position="83"/>
        <end position="264"/>
    </location>
</feature>
<proteinExistence type="evidence at transcript level"/>
<evidence type="ECO:0000250" key="1">
    <source>
        <dbReference type="UniProtKB" id="Q96G21"/>
    </source>
</evidence>
<evidence type="ECO:0000255" key="2">
    <source>
        <dbReference type="PROSITE-ProRule" id="PRU00034"/>
    </source>
</evidence>
<sequence>MLRREARLRREYLYRKAREEAQRSAQERKERLRRALEENRLIPTELRREALALQGSLEFDDAGGEGVTSHVDDEYRWAGVEDPKVMITTSRDPSSRLKMFAKELKLVFPGAQRMNRGRHEVGALVRACKANGVTDLLVVHEHRGTPVGLIVSHLPFGPTAYFTLCNVVMRHDIPDLGTMSEAKPHLITHGFSSRLGKRVSDILRYLFPVPKDDSHRVITFANQDDYISFRHHVYKKTDHRNVELTEVGPRFELKLYMIRLGTLEQEATADVEWRWHPYTNTARKRVFLSAE</sequence>
<keyword id="KW-0539">Nucleus</keyword>
<keyword id="KW-1185">Reference proteome</keyword>
<keyword id="KW-0687">Ribonucleoprotein</keyword>
<keyword id="KW-0690">Ribosome biogenesis</keyword>
<keyword id="KW-0698">rRNA processing</keyword>
<comment type="function">
    <text evidence="1">Component of the 60-80S U3 small nucleolar ribonucleoprotein (U3 snoRNP). Required for the early cleavages during pre-18S ribosomal RNA processing. Part of the small subunit (SSU) processome, first precursor of the small eukaryotic ribosomal subunit. During the assembly of the SSU processome in the nucleolus, many ribosome biogenesis factors, an RNA chaperone and ribosomal proteins associate with the nascent pre-rRNA and work in concert to generate RNA folding, modifications, rearrangements and cleavage as well as targeted degradation of pre-ribosomal RNA by the RNA exosome.</text>
</comment>
<comment type="subunit">
    <text evidence="1">Part of the small subunit (SSU) processome, composed of more than 70 proteins and the RNA chaperone small nucleolar RNA (snoRNA) U3. Component of a heterotrimeric complex containing IMP3, IMP4 and MPHOSPH10. Interacts with MPHOSPH10.</text>
</comment>
<comment type="subcellular location">
    <subcellularLocation>
        <location evidence="1">Nucleus</location>
        <location evidence="1">Nucleolus</location>
    </subcellularLocation>
</comment>
<gene>
    <name type="primary">IMP4</name>
</gene>
<name>IMP4_PONAB</name>
<dbReference type="EMBL" id="CR859548">
    <property type="protein sequence ID" value="CAH91713.1"/>
    <property type="molecule type" value="mRNA"/>
</dbReference>
<dbReference type="RefSeq" id="XP_009233960.1">
    <property type="nucleotide sequence ID" value="XM_009235685.1"/>
</dbReference>
<dbReference type="RefSeq" id="XP_063568734.1">
    <property type="nucleotide sequence ID" value="XM_063712664.1"/>
</dbReference>
<dbReference type="SMR" id="Q5R947"/>
<dbReference type="FunCoup" id="Q5R947">
    <property type="interactions" value="2240"/>
</dbReference>
<dbReference type="STRING" id="9601.ENSPPYP00000014966"/>
<dbReference type="GeneID" id="100174526"/>
<dbReference type="eggNOG" id="KOG2781">
    <property type="taxonomic scope" value="Eukaryota"/>
</dbReference>
<dbReference type="HOGENOM" id="CLU_040063_2_0_1"/>
<dbReference type="InParanoid" id="Q5R947"/>
<dbReference type="TreeFam" id="TF300016"/>
<dbReference type="Proteomes" id="UP000001595">
    <property type="component" value="Unplaced"/>
</dbReference>
<dbReference type="GO" id="GO:0034457">
    <property type="term" value="C:Mpp10 complex"/>
    <property type="evidence" value="ECO:0007669"/>
    <property type="project" value="TreeGrafter"/>
</dbReference>
<dbReference type="GO" id="GO:0032040">
    <property type="term" value="C:small-subunit processome"/>
    <property type="evidence" value="ECO:0000250"/>
    <property type="project" value="UniProtKB"/>
</dbReference>
<dbReference type="GO" id="GO:0042134">
    <property type="term" value="F:rRNA primary transcript binding"/>
    <property type="evidence" value="ECO:0007669"/>
    <property type="project" value="InterPro"/>
</dbReference>
<dbReference type="GO" id="GO:0030515">
    <property type="term" value="F:snoRNA binding"/>
    <property type="evidence" value="ECO:0007669"/>
    <property type="project" value="TreeGrafter"/>
</dbReference>
<dbReference type="GO" id="GO:0042274">
    <property type="term" value="P:ribosomal small subunit biogenesis"/>
    <property type="evidence" value="ECO:0000250"/>
    <property type="project" value="UniProtKB"/>
</dbReference>
<dbReference type="GO" id="GO:0006364">
    <property type="term" value="P:rRNA processing"/>
    <property type="evidence" value="ECO:0007669"/>
    <property type="project" value="UniProtKB-KW"/>
</dbReference>
<dbReference type="FunFam" id="3.40.50.10480:FF:000001">
    <property type="entry name" value="IMP4, U3 small nucleolar ribonucleoprotein"/>
    <property type="match status" value="1"/>
</dbReference>
<dbReference type="Gene3D" id="3.40.50.10480">
    <property type="entry name" value="Probable brix-domain ribosomal biogenesis protein"/>
    <property type="match status" value="1"/>
</dbReference>
<dbReference type="InterPro" id="IPR007109">
    <property type="entry name" value="Brix"/>
</dbReference>
<dbReference type="InterPro" id="IPR044281">
    <property type="entry name" value="IMP4/RPF1"/>
</dbReference>
<dbReference type="PANTHER" id="PTHR22734">
    <property type="entry name" value="U3 SMALL NUCLEOLAR RIBONUCLEOPROTEIN PROTEIN IMP4"/>
    <property type="match status" value="1"/>
</dbReference>
<dbReference type="PANTHER" id="PTHR22734:SF2">
    <property type="entry name" value="U3 SMALL NUCLEOLAR RIBONUCLEOPROTEIN PROTEIN IMP4"/>
    <property type="match status" value="1"/>
</dbReference>
<dbReference type="Pfam" id="PF04427">
    <property type="entry name" value="Brix"/>
    <property type="match status" value="1"/>
</dbReference>
<dbReference type="SMART" id="SM00879">
    <property type="entry name" value="Brix"/>
    <property type="match status" value="1"/>
</dbReference>
<dbReference type="SUPFAM" id="SSF52954">
    <property type="entry name" value="Class II aaRS ABD-related"/>
    <property type="match status" value="1"/>
</dbReference>
<dbReference type="PROSITE" id="PS50833">
    <property type="entry name" value="BRIX"/>
    <property type="match status" value="1"/>
</dbReference>
<organism>
    <name type="scientific">Pongo abelii</name>
    <name type="common">Sumatran orangutan</name>
    <name type="synonym">Pongo pygmaeus abelii</name>
    <dbReference type="NCBI Taxonomy" id="9601"/>
    <lineage>
        <taxon>Eukaryota</taxon>
        <taxon>Metazoa</taxon>
        <taxon>Chordata</taxon>
        <taxon>Craniata</taxon>
        <taxon>Vertebrata</taxon>
        <taxon>Euteleostomi</taxon>
        <taxon>Mammalia</taxon>
        <taxon>Eutheria</taxon>
        <taxon>Euarchontoglires</taxon>
        <taxon>Primates</taxon>
        <taxon>Haplorrhini</taxon>
        <taxon>Catarrhini</taxon>
        <taxon>Hominidae</taxon>
        <taxon>Pongo</taxon>
    </lineage>
</organism>
<protein>
    <recommendedName>
        <fullName>U3 small nucleolar ribonucleoprotein protein IMP4</fullName>
        <shortName>U3 snoRNP protein IMP4</shortName>
    </recommendedName>
</protein>
<accession>Q5R947</accession>
<reference key="1">
    <citation type="submission" date="2004-11" db="EMBL/GenBank/DDBJ databases">
        <authorList>
            <consortium name="The German cDNA consortium"/>
        </authorList>
    </citation>
    <scope>NUCLEOTIDE SEQUENCE [LARGE SCALE MRNA] OF 2-291</scope>
    <source>
        <tissue>Brain cortex</tissue>
    </source>
</reference>